<reference key="1">
    <citation type="submission" date="2007-04" db="EMBL/GenBank/DDBJ databases">
        <title>Genome sequence of the thermophilic hydrogen-producing bacterium Caldicellulosiruptor saccharolyticus DSM 8903.</title>
        <authorList>
            <person name="Copeland A."/>
            <person name="Lucas S."/>
            <person name="Lapidus A."/>
            <person name="Barry K."/>
            <person name="Detter J.C."/>
            <person name="Glavina del Rio T."/>
            <person name="Hammon N."/>
            <person name="Israni S."/>
            <person name="Dalin E."/>
            <person name="Tice H."/>
            <person name="Pitluck S."/>
            <person name="Kiss H."/>
            <person name="Brettin T."/>
            <person name="Bruce D."/>
            <person name="Han C."/>
            <person name="Schmutz J."/>
            <person name="Larimer F."/>
            <person name="Land M."/>
            <person name="Hauser L."/>
            <person name="Kyrpides N."/>
            <person name="Lykidis A."/>
            <person name="van de Werken H.J.G."/>
            <person name="Verhaart M.R.A."/>
            <person name="VanFossen A.L."/>
            <person name="Lewis D.L."/>
            <person name="Nichols J.D."/>
            <person name="Goorissen H.P."/>
            <person name="van Niel E.W.J."/>
            <person name="Stams F.J.M."/>
            <person name="Willquist K.U."/>
            <person name="Ward D.E."/>
            <person name="van der Oost J."/>
            <person name="Kelly R.M."/>
            <person name="Kengen S.M.W."/>
            <person name="Richardson P."/>
        </authorList>
    </citation>
    <scope>NUCLEOTIDE SEQUENCE [LARGE SCALE GENOMIC DNA]</scope>
    <source>
        <strain>ATCC 43494 / DSM 8903 / Tp8T 6331</strain>
    </source>
</reference>
<dbReference type="EC" id="2.7.7.60" evidence="1"/>
<dbReference type="EMBL" id="CP000679">
    <property type="protein sequence ID" value="ABP67778.1"/>
    <property type="molecule type" value="Genomic_DNA"/>
</dbReference>
<dbReference type="RefSeq" id="WP_011917707.1">
    <property type="nucleotide sequence ID" value="NC_009437.1"/>
</dbReference>
<dbReference type="SMR" id="A4XLJ3"/>
<dbReference type="STRING" id="351627.Csac_2198"/>
<dbReference type="KEGG" id="csc:Csac_2198"/>
<dbReference type="eggNOG" id="COG1211">
    <property type="taxonomic scope" value="Bacteria"/>
</dbReference>
<dbReference type="HOGENOM" id="CLU_061281_2_2_9"/>
<dbReference type="OrthoDB" id="9806837at2"/>
<dbReference type="UniPathway" id="UPA00056">
    <property type="reaction ID" value="UER00093"/>
</dbReference>
<dbReference type="Proteomes" id="UP000000256">
    <property type="component" value="Chromosome"/>
</dbReference>
<dbReference type="GO" id="GO:0050518">
    <property type="term" value="F:2-C-methyl-D-erythritol 4-phosphate cytidylyltransferase activity"/>
    <property type="evidence" value="ECO:0007669"/>
    <property type="project" value="UniProtKB-UniRule"/>
</dbReference>
<dbReference type="GO" id="GO:0019288">
    <property type="term" value="P:isopentenyl diphosphate biosynthetic process, methylerythritol 4-phosphate pathway"/>
    <property type="evidence" value="ECO:0007669"/>
    <property type="project" value="UniProtKB-UniRule"/>
</dbReference>
<dbReference type="CDD" id="cd02516">
    <property type="entry name" value="CDP-ME_synthetase"/>
    <property type="match status" value="1"/>
</dbReference>
<dbReference type="FunFam" id="3.90.550.10:FF:000003">
    <property type="entry name" value="2-C-methyl-D-erythritol 4-phosphate cytidylyltransferase"/>
    <property type="match status" value="1"/>
</dbReference>
<dbReference type="Gene3D" id="3.90.550.10">
    <property type="entry name" value="Spore Coat Polysaccharide Biosynthesis Protein SpsA, Chain A"/>
    <property type="match status" value="1"/>
</dbReference>
<dbReference type="HAMAP" id="MF_00108">
    <property type="entry name" value="IspD"/>
    <property type="match status" value="1"/>
</dbReference>
<dbReference type="InterPro" id="IPR001228">
    <property type="entry name" value="IspD"/>
</dbReference>
<dbReference type="InterPro" id="IPR034683">
    <property type="entry name" value="IspD/TarI"/>
</dbReference>
<dbReference type="InterPro" id="IPR050088">
    <property type="entry name" value="IspD/TarI_cytidylyltransf_bact"/>
</dbReference>
<dbReference type="InterPro" id="IPR029044">
    <property type="entry name" value="Nucleotide-diphossugar_trans"/>
</dbReference>
<dbReference type="NCBIfam" id="TIGR00453">
    <property type="entry name" value="ispD"/>
    <property type="match status" value="1"/>
</dbReference>
<dbReference type="PANTHER" id="PTHR32125">
    <property type="entry name" value="2-C-METHYL-D-ERYTHRITOL 4-PHOSPHATE CYTIDYLYLTRANSFERASE, CHLOROPLASTIC"/>
    <property type="match status" value="1"/>
</dbReference>
<dbReference type="PANTHER" id="PTHR32125:SF4">
    <property type="entry name" value="2-C-METHYL-D-ERYTHRITOL 4-PHOSPHATE CYTIDYLYLTRANSFERASE, CHLOROPLASTIC"/>
    <property type="match status" value="1"/>
</dbReference>
<dbReference type="Pfam" id="PF01128">
    <property type="entry name" value="IspD"/>
    <property type="match status" value="1"/>
</dbReference>
<dbReference type="SUPFAM" id="SSF53448">
    <property type="entry name" value="Nucleotide-diphospho-sugar transferases"/>
    <property type="match status" value="1"/>
</dbReference>
<name>ISPD_CALS8</name>
<protein>
    <recommendedName>
        <fullName evidence="1">2-C-methyl-D-erythritol 4-phosphate cytidylyltransferase</fullName>
        <ecNumber evidence="1">2.7.7.60</ecNumber>
    </recommendedName>
    <alternativeName>
        <fullName evidence="1">4-diphosphocytidyl-2C-methyl-D-erythritol synthase</fullName>
    </alternativeName>
    <alternativeName>
        <fullName evidence="1">MEP cytidylyltransferase</fullName>
        <shortName evidence="1">MCT</shortName>
    </alternativeName>
</protein>
<organism>
    <name type="scientific">Caldicellulosiruptor saccharolyticus (strain ATCC 43494 / DSM 8903 / Tp8T 6331)</name>
    <dbReference type="NCBI Taxonomy" id="351627"/>
    <lineage>
        <taxon>Bacteria</taxon>
        <taxon>Bacillati</taxon>
        <taxon>Bacillota</taxon>
        <taxon>Bacillota incertae sedis</taxon>
        <taxon>Caldicellulosiruptorales</taxon>
        <taxon>Caldicellulosiruptoraceae</taxon>
        <taxon>Caldicellulosiruptor</taxon>
    </lineage>
</organism>
<sequence length="224" mass="25407">MRTFALVCAAGSGKRFGGSTPKQFLFLEDKMVIEYSLCVFENSPFIDGVVILIPNGYKNIGDVLKEKYKKVLFWDYGEDERAKTVKKGLELIKGMCDFVAIHDAVRPFIDLELIEKLILEVKSSFAVAPAVSAKDTVKYVVDGYVQNTIPRENVYLVQTPQVFKFDLIYGAYEKFEDTCFTDDLQYVEALGVKPKIVENSSLNFKITTKEDMIFAKAIVEQFLK</sequence>
<evidence type="ECO:0000255" key="1">
    <source>
        <dbReference type="HAMAP-Rule" id="MF_00108"/>
    </source>
</evidence>
<comment type="function">
    <text evidence="1">Catalyzes the formation of 4-diphosphocytidyl-2-C-methyl-D-erythritol from CTP and 2-C-methyl-D-erythritol 4-phosphate (MEP).</text>
</comment>
<comment type="catalytic activity">
    <reaction evidence="1">
        <text>2-C-methyl-D-erythritol 4-phosphate + CTP + H(+) = 4-CDP-2-C-methyl-D-erythritol + diphosphate</text>
        <dbReference type="Rhea" id="RHEA:13429"/>
        <dbReference type="ChEBI" id="CHEBI:15378"/>
        <dbReference type="ChEBI" id="CHEBI:33019"/>
        <dbReference type="ChEBI" id="CHEBI:37563"/>
        <dbReference type="ChEBI" id="CHEBI:57823"/>
        <dbReference type="ChEBI" id="CHEBI:58262"/>
        <dbReference type="EC" id="2.7.7.60"/>
    </reaction>
</comment>
<comment type="pathway">
    <text evidence="1">Isoprenoid biosynthesis; isopentenyl diphosphate biosynthesis via DXP pathway; isopentenyl diphosphate from 1-deoxy-D-xylulose 5-phosphate: step 2/6.</text>
</comment>
<comment type="similarity">
    <text evidence="1">Belongs to the IspD/TarI cytidylyltransferase family. IspD subfamily.</text>
</comment>
<proteinExistence type="inferred from homology"/>
<keyword id="KW-0414">Isoprene biosynthesis</keyword>
<keyword id="KW-0548">Nucleotidyltransferase</keyword>
<keyword id="KW-0808">Transferase</keyword>
<accession>A4XLJ3</accession>
<gene>
    <name evidence="1" type="primary">ispD</name>
    <name type="ordered locus">Csac_2198</name>
</gene>
<feature type="chain" id="PRO_1000022911" description="2-C-methyl-D-erythritol 4-phosphate cytidylyltransferase">
    <location>
        <begin position="1"/>
        <end position="224"/>
    </location>
</feature>
<feature type="site" description="Transition state stabilizer" evidence="1">
    <location>
        <position position="15"/>
    </location>
</feature>
<feature type="site" description="Transition state stabilizer" evidence="1">
    <location>
        <position position="22"/>
    </location>
</feature>
<feature type="site" description="Positions MEP for the nucleophilic attack" evidence="1">
    <location>
        <position position="151"/>
    </location>
</feature>
<feature type="site" description="Positions MEP for the nucleophilic attack" evidence="1">
    <location>
        <position position="205"/>
    </location>
</feature>